<name>EID1_MOUSE</name>
<dbReference type="EMBL" id="AF509968">
    <property type="protein sequence ID" value="AAM34760.1"/>
    <property type="molecule type" value="mRNA"/>
</dbReference>
<dbReference type="EMBL" id="AK002559">
    <property type="protein sequence ID" value="BAB22187.1"/>
    <property type="molecule type" value="mRNA"/>
</dbReference>
<dbReference type="EMBL" id="AK005258">
    <property type="protein sequence ID" value="BAB23911.1"/>
    <property type="molecule type" value="mRNA"/>
</dbReference>
<dbReference type="EMBL" id="AK011293">
    <property type="protein sequence ID" value="BAB27521.1"/>
    <property type="molecule type" value="mRNA"/>
</dbReference>
<dbReference type="EMBL" id="AK014440">
    <property type="protein sequence ID" value="BAB29352.1"/>
    <property type="molecule type" value="mRNA"/>
</dbReference>
<dbReference type="EMBL" id="AK017543">
    <property type="protein sequence ID" value="BAB30797.1"/>
    <property type="molecule type" value="mRNA"/>
</dbReference>
<dbReference type="EMBL" id="AK077783">
    <property type="protein sequence ID" value="BAC37007.1"/>
    <property type="molecule type" value="mRNA"/>
</dbReference>
<dbReference type="EMBL" id="AK078402">
    <property type="protein sequence ID" value="BAC37257.1"/>
    <property type="molecule type" value="mRNA"/>
</dbReference>
<dbReference type="EMBL" id="AK078409">
    <property type="protein sequence ID" value="BAC37261.1"/>
    <property type="molecule type" value="mRNA"/>
</dbReference>
<dbReference type="EMBL" id="AK078826">
    <property type="protein sequence ID" value="BAC37412.1"/>
    <property type="molecule type" value="mRNA"/>
</dbReference>
<dbReference type="EMBL" id="AK148555">
    <property type="protein sequence ID" value="BAE28618.1"/>
    <property type="molecule type" value="mRNA"/>
</dbReference>
<dbReference type="EMBL" id="AK169604">
    <property type="protein sequence ID" value="BAE41254.1"/>
    <property type="molecule type" value="mRNA"/>
</dbReference>
<dbReference type="EMBL" id="AK172612">
    <property type="protein sequence ID" value="BAE43093.1"/>
    <property type="molecule type" value="mRNA"/>
</dbReference>
<dbReference type="EMBL" id="AL929166">
    <property type="status" value="NOT_ANNOTATED_CDS"/>
    <property type="molecule type" value="Genomic_DNA"/>
</dbReference>
<dbReference type="CCDS" id="CCDS50696.1">
    <molecule id="Q9DCR4-2"/>
</dbReference>
<dbReference type="RefSeq" id="NP_079889.2">
    <molecule id="Q9DCR4-2"/>
    <property type="nucleotide sequence ID" value="NM_025613.3"/>
</dbReference>
<dbReference type="PDB" id="4NUF">
    <property type="method" value="X-ray"/>
    <property type="resolution" value="2.80 A"/>
    <property type="chains" value="P=91-106"/>
</dbReference>
<dbReference type="PDBsum" id="4NUF"/>
<dbReference type="SMR" id="Q9DCR4"/>
<dbReference type="BioGRID" id="208425">
    <property type="interactions" value="4"/>
</dbReference>
<dbReference type="FunCoup" id="Q9DCR4">
    <property type="interactions" value="1014"/>
</dbReference>
<dbReference type="IntAct" id="Q9DCR4">
    <property type="interactions" value="1"/>
</dbReference>
<dbReference type="STRING" id="10090.ENSMUSP00000129413"/>
<dbReference type="iPTMnet" id="Q9DCR4"/>
<dbReference type="PhosphoSitePlus" id="Q9DCR4"/>
<dbReference type="PaxDb" id="10090-ENSMUSP00000129413"/>
<dbReference type="ProteomicsDB" id="277842">
    <molecule id="Q9DCR4-1"/>
</dbReference>
<dbReference type="ProteomicsDB" id="277843">
    <molecule id="Q9DCR4-2"/>
</dbReference>
<dbReference type="Antibodypedia" id="53733">
    <property type="antibodies" value="146 antibodies from 25 providers"/>
</dbReference>
<dbReference type="DNASU" id="58521"/>
<dbReference type="Ensembl" id="ENSMUST00000164756.4">
    <molecule id="Q9DCR4-2"/>
    <property type="protein sequence ID" value="ENSMUSP00000129413.3"/>
    <property type="gene ID" value="ENSMUSG00000091337.4"/>
</dbReference>
<dbReference type="GeneID" id="58521"/>
<dbReference type="KEGG" id="mmu:58521"/>
<dbReference type="UCSC" id="uc008mcx.1">
    <molecule id="Q9DCR4-1"/>
    <property type="organism name" value="mouse"/>
</dbReference>
<dbReference type="AGR" id="MGI:1889651"/>
<dbReference type="CTD" id="23741"/>
<dbReference type="MGI" id="MGI:1889651">
    <property type="gene designation" value="Eid1"/>
</dbReference>
<dbReference type="VEuPathDB" id="HostDB:ENSMUSG00000091337"/>
<dbReference type="eggNOG" id="ENOG502RQIS">
    <property type="taxonomic scope" value="Eukaryota"/>
</dbReference>
<dbReference type="GeneTree" id="ENSGT00940000154796"/>
<dbReference type="HOGENOM" id="CLU_1421050_0_0_1"/>
<dbReference type="InParanoid" id="Q9DCR4"/>
<dbReference type="OMA" id="GCDEMID"/>
<dbReference type="OrthoDB" id="91173at9989"/>
<dbReference type="PhylomeDB" id="Q9DCR4"/>
<dbReference type="TreeFam" id="TF337633"/>
<dbReference type="BioGRID-ORCS" id="58521">
    <property type="hits" value="1 hit in 79 CRISPR screens"/>
</dbReference>
<dbReference type="ChiTaRS" id="Eid1">
    <property type="organism name" value="mouse"/>
</dbReference>
<dbReference type="PRO" id="PR:Q9DCR4"/>
<dbReference type="Proteomes" id="UP000000589">
    <property type="component" value="Chromosome 2"/>
</dbReference>
<dbReference type="RNAct" id="Q9DCR4">
    <property type="molecule type" value="protein"/>
</dbReference>
<dbReference type="Bgee" id="ENSMUSG00000091337">
    <property type="expression patterns" value="Expressed in barrel cortex and 255 other cell types or tissues"/>
</dbReference>
<dbReference type="GO" id="GO:0036464">
    <property type="term" value="C:cytoplasmic ribonucleoprotein granule"/>
    <property type="evidence" value="ECO:0007669"/>
    <property type="project" value="Ensembl"/>
</dbReference>
<dbReference type="GO" id="GO:0005654">
    <property type="term" value="C:nucleoplasm"/>
    <property type="evidence" value="ECO:0007669"/>
    <property type="project" value="Ensembl"/>
</dbReference>
<dbReference type="GO" id="GO:0005634">
    <property type="term" value="C:nucleus"/>
    <property type="evidence" value="ECO:0000266"/>
    <property type="project" value="MGI"/>
</dbReference>
<dbReference type="GO" id="GO:0035035">
    <property type="term" value="F:histone acetyltransferase binding"/>
    <property type="evidence" value="ECO:0000250"/>
    <property type="project" value="UniProtKB"/>
</dbReference>
<dbReference type="GO" id="GO:0003714">
    <property type="term" value="F:transcription corepressor activity"/>
    <property type="evidence" value="ECO:0000315"/>
    <property type="project" value="UniProtKB"/>
</dbReference>
<dbReference type="GO" id="GO:0030154">
    <property type="term" value="P:cell differentiation"/>
    <property type="evidence" value="ECO:0000250"/>
    <property type="project" value="UniProtKB"/>
</dbReference>
<dbReference type="GO" id="GO:0045892">
    <property type="term" value="P:negative regulation of DNA-templated transcription"/>
    <property type="evidence" value="ECO:0000250"/>
    <property type="project" value="UniProtKB"/>
</dbReference>
<dbReference type="GO" id="GO:0000122">
    <property type="term" value="P:negative regulation of transcription by RNA polymerase II"/>
    <property type="evidence" value="ECO:0000266"/>
    <property type="project" value="MGI"/>
</dbReference>
<dbReference type="IDEAL" id="IID50234"/>
<dbReference type="InterPro" id="IPR033258">
    <property type="entry name" value="EID"/>
</dbReference>
<dbReference type="PANTHER" id="PTHR15556:SF5">
    <property type="entry name" value="EP300-INTERACTING INHIBITOR OF DIFFERENTIATION 1"/>
    <property type="match status" value="1"/>
</dbReference>
<dbReference type="PANTHER" id="PTHR15556">
    <property type="entry name" value="EP300-INTERACTING INHIBITOR OF DIFFERENTIATION 2-RELATED"/>
    <property type="match status" value="1"/>
</dbReference>
<organism>
    <name type="scientific">Mus musculus</name>
    <name type="common">Mouse</name>
    <dbReference type="NCBI Taxonomy" id="10090"/>
    <lineage>
        <taxon>Eukaryota</taxon>
        <taxon>Metazoa</taxon>
        <taxon>Chordata</taxon>
        <taxon>Craniata</taxon>
        <taxon>Vertebrata</taxon>
        <taxon>Euteleostomi</taxon>
        <taxon>Mammalia</taxon>
        <taxon>Eutheria</taxon>
        <taxon>Euarchontoglires</taxon>
        <taxon>Glires</taxon>
        <taxon>Rodentia</taxon>
        <taxon>Myomorpha</taxon>
        <taxon>Muroidea</taxon>
        <taxon>Muridae</taxon>
        <taxon>Murinae</taxon>
        <taxon>Mus</taxon>
        <taxon>Mus</taxon>
    </lineage>
</organism>
<evidence type="ECO:0000250" key="1">
    <source>
        <dbReference type="UniProtKB" id="Q9Y6B2"/>
    </source>
</evidence>
<evidence type="ECO:0000256" key="2">
    <source>
        <dbReference type="SAM" id="MobiDB-lite"/>
    </source>
</evidence>
<evidence type="ECO:0000269" key="3">
    <source>
    </source>
</evidence>
<evidence type="ECO:0000269" key="4">
    <source>
    </source>
</evidence>
<evidence type="ECO:0000303" key="5">
    <source>
    </source>
</evidence>
<evidence type="ECO:0000303" key="6">
    <source>
    </source>
</evidence>
<evidence type="ECO:0000305" key="7"/>
<evidence type="ECO:0000312" key="8">
    <source>
        <dbReference type="EMBL" id="AAM34760.1"/>
    </source>
</evidence>
<evidence type="ECO:0000312" key="9">
    <source>
        <dbReference type="EMBL" id="BAB22187.1"/>
    </source>
</evidence>
<evidence type="ECO:0000312" key="10">
    <source>
        <dbReference type="EMBL" id="BAB23911.1"/>
    </source>
</evidence>
<evidence type="ECO:0000312" key="11">
    <source>
        <dbReference type="EMBL" id="BAB30797.1"/>
    </source>
</evidence>
<evidence type="ECO:0000312" key="12">
    <source>
        <dbReference type="EMBL" id="BAC37007.1"/>
    </source>
</evidence>
<evidence type="ECO:0000312" key="13">
    <source>
        <dbReference type="EMBL" id="BAC37257.1"/>
    </source>
</evidence>
<evidence type="ECO:0000312" key="14">
    <source>
        <dbReference type="EMBL" id="BAC37412.1"/>
    </source>
</evidence>
<evidence type="ECO:0000312" key="15">
    <source>
        <dbReference type="EMBL" id="BAE28618.1"/>
    </source>
</evidence>
<evidence type="ECO:0000312" key="16">
    <source>
        <dbReference type="EMBL" id="BAE41254.1"/>
    </source>
</evidence>
<evidence type="ECO:0000312" key="17">
    <source>
        <dbReference type="EMBL" id="BAE43093.1"/>
    </source>
</evidence>
<evidence type="ECO:0000312" key="18">
    <source>
        <dbReference type="MGI" id="MGI:1889651"/>
    </source>
</evidence>
<evidence type="ECO:0007829" key="19">
    <source>
        <dbReference type="PDB" id="4NUF"/>
    </source>
</evidence>
<gene>
    <name evidence="18" type="primary">Eid1</name>
    <name evidence="18" type="synonym">Cri1</name>
</gene>
<comment type="function">
    <text evidence="3">Interacts with RB1 and EP300 and acts as a repressor of MYOD1 transactivation. Inhibits EP300 and CBP histone acetyltransferase activity. May be involved in coupling cell cycle exit to the transcriptional activation of genes required for cellular differentiation. May act as a candidate coinhibitory factor for NR0B2 that can be directly linked to transcription inhibitory mechanisms.</text>
</comment>
<comment type="subunit">
    <text evidence="1 3">Interacts via its LXCXE motif with the entire pocket region of RB1. Interacts with EP300, NR0B2 and TRIM27.</text>
</comment>
<comment type="subcellular location">
    <subcellularLocation>
        <location evidence="3">Nucleus</location>
    </subcellularLocation>
    <subcellularLocation>
        <location evidence="3">Cytoplasm</location>
    </subcellularLocation>
    <text evidence="3">May shuttle between nucleus and cytoplasm.</text>
</comment>
<comment type="alternative products">
    <event type="alternative splicing"/>
    <isoform>
        <id>Q9DCR4-1</id>
        <name evidence="4">1</name>
        <sequence type="displayed"/>
    </isoform>
    <isoform>
        <id>Q9DCR4-2</id>
        <name evidence="3">2</name>
        <sequence type="described" ref="VSP_052455"/>
    </isoform>
</comment>
<comment type="tissue specificity">
    <text evidence="3">Expressed in all adult tissues examined and during embryogenesis.</text>
</comment>
<comment type="miscellaneous">
    <text evidence="1">Inhibition of MYOD1 may be partly due to the ability of EID1 to bind and inhibit EP300 histone acetyltransferase activity.</text>
</comment>
<reference evidence="7 8" key="1">
    <citation type="journal article" date="2002" name="EMBO Rep.">
        <title>A transcriptional inhibitor targeted by the atypical orphan nuclear receptor SHP.</title>
        <authorList>
            <person name="Bavner A."/>
            <person name="Johansson L."/>
            <person name="Toresson G."/>
            <person name="Gustafsson J.-A."/>
            <person name="Treuter E."/>
        </authorList>
    </citation>
    <scope>NUCLEOTIDE SEQUENCE [MRNA] (ISOFORM 2)</scope>
    <scope>FUNCTION</scope>
    <scope>INTERACTION WITH NR0B2</scope>
    <scope>SUBCELLULAR LOCATION</scope>
    <scope>TISSUE SPECIFICITY</scope>
    <source>
        <strain evidence="8">Swiss Webster / NIH</strain>
        <tissue evidence="8">Embryo</tissue>
    </source>
</reference>
<reference evidence="7 9" key="2">
    <citation type="journal article" date="2005" name="Science">
        <title>The transcriptional landscape of the mammalian genome.</title>
        <authorList>
            <person name="Carninci P."/>
            <person name="Kasukawa T."/>
            <person name="Katayama S."/>
            <person name="Gough J."/>
            <person name="Frith M.C."/>
            <person name="Maeda N."/>
            <person name="Oyama R."/>
            <person name="Ravasi T."/>
            <person name="Lenhard B."/>
            <person name="Wells C."/>
            <person name="Kodzius R."/>
            <person name="Shimokawa K."/>
            <person name="Bajic V.B."/>
            <person name="Brenner S.E."/>
            <person name="Batalov S."/>
            <person name="Forrest A.R."/>
            <person name="Zavolan M."/>
            <person name="Davis M.J."/>
            <person name="Wilming L.G."/>
            <person name="Aidinis V."/>
            <person name="Allen J.E."/>
            <person name="Ambesi-Impiombato A."/>
            <person name="Apweiler R."/>
            <person name="Aturaliya R.N."/>
            <person name="Bailey T.L."/>
            <person name="Bansal M."/>
            <person name="Baxter L."/>
            <person name="Beisel K.W."/>
            <person name="Bersano T."/>
            <person name="Bono H."/>
            <person name="Chalk A.M."/>
            <person name="Chiu K.P."/>
            <person name="Choudhary V."/>
            <person name="Christoffels A."/>
            <person name="Clutterbuck D.R."/>
            <person name="Crowe M.L."/>
            <person name="Dalla E."/>
            <person name="Dalrymple B.P."/>
            <person name="de Bono B."/>
            <person name="Della Gatta G."/>
            <person name="di Bernardo D."/>
            <person name="Down T."/>
            <person name="Engstrom P."/>
            <person name="Fagiolini M."/>
            <person name="Faulkner G."/>
            <person name="Fletcher C.F."/>
            <person name="Fukushima T."/>
            <person name="Furuno M."/>
            <person name="Futaki S."/>
            <person name="Gariboldi M."/>
            <person name="Georgii-Hemming P."/>
            <person name="Gingeras T.R."/>
            <person name="Gojobori T."/>
            <person name="Green R.E."/>
            <person name="Gustincich S."/>
            <person name="Harbers M."/>
            <person name="Hayashi Y."/>
            <person name="Hensch T.K."/>
            <person name="Hirokawa N."/>
            <person name="Hill D."/>
            <person name="Huminiecki L."/>
            <person name="Iacono M."/>
            <person name="Ikeo K."/>
            <person name="Iwama A."/>
            <person name="Ishikawa T."/>
            <person name="Jakt M."/>
            <person name="Kanapin A."/>
            <person name="Katoh M."/>
            <person name="Kawasawa Y."/>
            <person name="Kelso J."/>
            <person name="Kitamura H."/>
            <person name="Kitano H."/>
            <person name="Kollias G."/>
            <person name="Krishnan S.P."/>
            <person name="Kruger A."/>
            <person name="Kummerfeld S.K."/>
            <person name="Kurochkin I.V."/>
            <person name="Lareau L.F."/>
            <person name="Lazarevic D."/>
            <person name="Lipovich L."/>
            <person name="Liu J."/>
            <person name="Liuni S."/>
            <person name="McWilliam S."/>
            <person name="Madan Babu M."/>
            <person name="Madera M."/>
            <person name="Marchionni L."/>
            <person name="Matsuda H."/>
            <person name="Matsuzawa S."/>
            <person name="Miki H."/>
            <person name="Mignone F."/>
            <person name="Miyake S."/>
            <person name="Morris K."/>
            <person name="Mottagui-Tabar S."/>
            <person name="Mulder N."/>
            <person name="Nakano N."/>
            <person name="Nakauchi H."/>
            <person name="Ng P."/>
            <person name="Nilsson R."/>
            <person name="Nishiguchi S."/>
            <person name="Nishikawa S."/>
            <person name="Nori F."/>
            <person name="Ohara O."/>
            <person name="Okazaki Y."/>
            <person name="Orlando V."/>
            <person name="Pang K.C."/>
            <person name="Pavan W.J."/>
            <person name="Pavesi G."/>
            <person name="Pesole G."/>
            <person name="Petrovsky N."/>
            <person name="Piazza S."/>
            <person name="Reed J."/>
            <person name="Reid J.F."/>
            <person name="Ring B.Z."/>
            <person name="Ringwald M."/>
            <person name="Rost B."/>
            <person name="Ruan Y."/>
            <person name="Salzberg S.L."/>
            <person name="Sandelin A."/>
            <person name="Schneider C."/>
            <person name="Schoenbach C."/>
            <person name="Sekiguchi K."/>
            <person name="Semple C.A."/>
            <person name="Seno S."/>
            <person name="Sessa L."/>
            <person name="Sheng Y."/>
            <person name="Shibata Y."/>
            <person name="Shimada H."/>
            <person name="Shimada K."/>
            <person name="Silva D."/>
            <person name="Sinclair B."/>
            <person name="Sperling S."/>
            <person name="Stupka E."/>
            <person name="Sugiura K."/>
            <person name="Sultana R."/>
            <person name="Takenaka Y."/>
            <person name="Taki K."/>
            <person name="Tammoja K."/>
            <person name="Tan S.L."/>
            <person name="Tang S."/>
            <person name="Taylor M.S."/>
            <person name="Tegner J."/>
            <person name="Teichmann S.A."/>
            <person name="Ueda H.R."/>
            <person name="van Nimwegen E."/>
            <person name="Verardo R."/>
            <person name="Wei C.L."/>
            <person name="Yagi K."/>
            <person name="Yamanishi H."/>
            <person name="Zabarovsky E."/>
            <person name="Zhu S."/>
            <person name="Zimmer A."/>
            <person name="Hide W."/>
            <person name="Bult C."/>
            <person name="Grimmond S.M."/>
            <person name="Teasdale R.D."/>
            <person name="Liu E.T."/>
            <person name="Brusic V."/>
            <person name="Quackenbush J."/>
            <person name="Wahlestedt C."/>
            <person name="Mattick J.S."/>
            <person name="Hume D.A."/>
            <person name="Kai C."/>
            <person name="Sasaki D."/>
            <person name="Tomaru Y."/>
            <person name="Fukuda S."/>
            <person name="Kanamori-Katayama M."/>
            <person name="Suzuki M."/>
            <person name="Aoki J."/>
            <person name="Arakawa T."/>
            <person name="Iida J."/>
            <person name="Imamura K."/>
            <person name="Itoh M."/>
            <person name="Kato T."/>
            <person name="Kawaji H."/>
            <person name="Kawagashira N."/>
            <person name="Kawashima T."/>
            <person name="Kojima M."/>
            <person name="Kondo S."/>
            <person name="Konno H."/>
            <person name="Nakano K."/>
            <person name="Ninomiya N."/>
            <person name="Nishio T."/>
            <person name="Okada M."/>
            <person name="Plessy C."/>
            <person name="Shibata K."/>
            <person name="Shiraki T."/>
            <person name="Suzuki S."/>
            <person name="Tagami M."/>
            <person name="Waki K."/>
            <person name="Watahiki A."/>
            <person name="Okamura-Oho Y."/>
            <person name="Suzuki H."/>
            <person name="Kawai J."/>
            <person name="Hayashizaki Y."/>
        </authorList>
    </citation>
    <scope>NUCLEOTIDE SEQUENCE [LARGE SCALE MRNA] (ISOFORMS 1 AND 2)</scope>
    <source>
        <strain evidence="9">C57BL/6J</strain>
        <strain evidence="16">NOD</strain>
        <tissue evidence="10">Cerebellum</tissue>
        <tissue evidence="11">Embryo</tissue>
        <tissue evidence="14">Embryonic lung</tissue>
        <tissue evidence="9">Kidney</tissue>
        <tissue evidence="17">Spleen</tissue>
        <tissue evidence="15">Sympathetic ganglion</tissue>
        <tissue evidence="12">Thymus</tissue>
        <tissue evidence="13">Wolffian duct</tissue>
    </source>
</reference>
<reference key="3">
    <citation type="journal article" date="2009" name="PLoS Biol.">
        <title>Lineage-specific biology revealed by a finished genome assembly of the mouse.</title>
        <authorList>
            <person name="Church D.M."/>
            <person name="Goodstadt L."/>
            <person name="Hillier L.W."/>
            <person name="Zody M.C."/>
            <person name="Goldstein S."/>
            <person name="She X."/>
            <person name="Bult C.J."/>
            <person name="Agarwala R."/>
            <person name="Cherry J.L."/>
            <person name="DiCuccio M."/>
            <person name="Hlavina W."/>
            <person name="Kapustin Y."/>
            <person name="Meric P."/>
            <person name="Maglott D."/>
            <person name="Birtle Z."/>
            <person name="Marques A.C."/>
            <person name="Graves T."/>
            <person name="Zhou S."/>
            <person name="Teague B."/>
            <person name="Potamousis K."/>
            <person name="Churas C."/>
            <person name="Place M."/>
            <person name="Herschleb J."/>
            <person name="Runnheim R."/>
            <person name="Forrest D."/>
            <person name="Amos-Landgraf J."/>
            <person name="Schwartz D.C."/>
            <person name="Cheng Z."/>
            <person name="Lindblad-Toh K."/>
            <person name="Eichler E.E."/>
            <person name="Ponting C.P."/>
        </authorList>
    </citation>
    <scope>NUCLEOTIDE SEQUENCE [LARGE SCALE GENOMIC DNA] (ISOFORM 2)</scope>
    <source>
        <strain>C57BL/6J</strain>
    </source>
</reference>
<keyword id="KW-0002">3D-structure</keyword>
<keyword id="KW-0025">Alternative splicing</keyword>
<keyword id="KW-0131">Cell cycle</keyword>
<keyword id="KW-0963">Cytoplasm</keyword>
<keyword id="KW-0221">Differentiation</keyword>
<keyword id="KW-0539">Nucleus</keyword>
<keyword id="KW-1185">Reference proteome</keyword>
<keyword id="KW-0678">Repressor</keyword>
<keyword id="KW-0804">Transcription</keyword>
<keyword id="KW-0805">Transcription regulation</keyword>
<feature type="chain" id="PRO_0000289157" description="EP300-interacting inhibitor of differentiation 1">
    <location>
        <begin position="1"/>
        <end position="169"/>
    </location>
</feature>
<feature type="region of interest" description="Disordered" evidence="2">
    <location>
        <begin position="31"/>
        <end position="50"/>
    </location>
</feature>
<feature type="region of interest" description="Interaction with NR0B2" evidence="3">
    <location>
        <begin position="54"/>
        <end position="120"/>
    </location>
</feature>
<feature type="short sequence motif" description="LXCXE motif">
    <location>
        <begin position="150"/>
        <end position="154"/>
    </location>
</feature>
<feature type="splice variant" id="VSP_052455" description="In isoform 2." evidence="5 6">
    <location>
        <begin position="160"/>
        <end position="169"/>
    </location>
</feature>
<feature type="sequence conflict" description="In Ref. 2; BAB30797." evidence="7" ref="2">
    <original>E</original>
    <variation>K</variation>
    <location>
        <position position="13"/>
    </location>
</feature>
<feature type="sequence conflict" description="In Ref. 2; BAB22187." evidence="7" ref="2">
    <original>G</original>
    <variation>W</variation>
    <location>
        <position position="36"/>
    </location>
</feature>
<feature type="sequence conflict" description="In Ref. 2; BAC37261." evidence="7" ref="2">
    <original>P</original>
    <variation>Q</variation>
    <location>
        <position position="37"/>
    </location>
</feature>
<feature type="sequence conflict" description="In Ref. 2; BAB30797." evidence="7" ref="2">
    <original>L</original>
    <variation>S</variation>
    <location>
        <position position="160"/>
    </location>
</feature>
<feature type="helix" evidence="19">
    <location>
        <begin position="94"/>
        <end position="101"/>
    </location>
</feature>
<feature type="helix" evidence="19">
    <location>
        <begin position="102"/>
        <end position="105"/>
    </location>
</feature>
<proteinExistence type="evidence at protein level"/>
<sequence>MAEMAELCELYEESNELQMDVLPGEGYMEVGRGARGPAPEEGPMEEEAGPAAARAQRGLFPEAGADLEGDEFDDWEDDYEFPEEERWSGAMHRVSAALEEANKVFLRTARAGDALDGGFQARCEKSPFDQLAFIEELFSLMVVNRLTEELGCDEIIDRELMLTREEETT</sequence>
<accession>Q9DCR4</accession>
<accession>Q3T9D1</accession>
<accession>Q8BP25</accession>
<accession>Q9CQ17</accession>
<accession>Q9CYM0</accession>
<protein>
    <recommendedName>
        <fullName>EP300-interacting inhibitor of differentiation 1</fullName>
    </recommendedName>
    <alternativeName>
        <fullName>CREBBP/EP300 inhibitory protein 1</fullName>
    </alternativeName>
    <alternativeName>
        <fullName>E1A-like inhibitor of differentiation 1</fullName>
        <shortName>EID-1</shortName>
    </alternativeName>
</protein>